<accession>P66938</accession>
<accession>Q99UC4</accession>
<reference key="1">
    <citation type="journal article" date="2001" name="Lancet">
        <title>Whole genome sequencing of meticillin-resistant Staphylococcus aureus.</title>
        <authorList>
            <person name="Kuroda M."/>
            <person name="Ohta T."/>
            <person name="Uchiyama I."/>
            <person name="Baba T."/>
            <person name="Yuzawa H."/>
            <person name="Kobayashi I."/>
            <person name="Cui L."/>
            <person name="Oguchi A."/>
            <person name="Aoki K."/>
            <person name="Nagai Y."/>
            <person name="Lian J.-Q."/>
            <person name="Ito T."/>
            <person name="Kanamori M."/>
            <person name="Matsumaru H."/>
            <person name="Maruyama A."/>
            <person name="Murakami H."/>
            <person name="Hosoyama A."/>
            <person name="Mizutani-Ui Y."/>
            <person name="Takahashi N.K."/>
            <person name="Sawano T."/>
            <person name="Inoue R."/>
            <person name="Kaito C."/>
            <person name="Sekimizu K."/>
            <person name="Hirakawa H."/>
            <person name="Kuhara S."/>
            <person name="Goto S."/>
            <person name="Yabuzaki J."/>
            <person name="Kanehisa M."/>
            <person name="Yamashita A."/>
            <person name="Oshima K."/>
            <person name="Furuya K."/>
            <person name="Yoshino C."/>
            <person name="Shiba T."/>
            <person name="Hattori M."/>
            <person name="Ogasawara N."/>
            <person name="Hayashi H."/>
            <person name="Hiramatsu K."/>
        </authorList>
    </citation>
    <scope>NUCLEOTIDE SEQUENCE [LARGE SCALE GENOMIC DNA]</scope>
    <source>
        <strain>Mu50 / ATCC 700699</strain>
    </source>
</reference>
<dbReference type="EC" id="5.6.2.2" evidence="1"/>
<dbReference type="EMBL" id="BA000017">
    <property type="protein sequence ID" value="BAB57516.1"/>
    <property type="status" value="ALT_INIT"/>
    <property type="molecule type" value="Genomic_DNA"/>
</dbReference>
<dbReference type="RefSeq" id="WP_001557340.1">
    <property type="nucleotide sequence ID" value="NC_002758.2"/>
</dbReference>
<dbReference type="SMR" id="P66938"/>
<dbReference type="KEGG" id="sav:SAV1354"/>
<dbReference type="HOGENOM" id="CLU_006146_4_1_9"/>
<dbReference type="Proteomes" id="UP000002481">
    <property type="component" value="Chromosome"/>
</dbReference>
<dbReference type="GO" id="GO:0005694">
    <property type="term" value="C:chromosome"/>
    <property type="evidence" value="ECO:0007669"/>
    <property type="project" value="InterPro"/>
</dbReference>
<dbReference type="GO" id="GO:0005524">
    <property type="term" value="F:ATP binding"/>
    <property type="evidence" value="ECO:0007669"/>
    <property type="project" value="UniProtKB-UniRule"/>
</dbReference>
<dbReference type="GO" id="GO:0003677">
    <property type="term" value="F:DNA binding"/>
    <property type="evidence" value="ECO:0007669"/>
    <property type="project" value="UniProtKB-UniRule"/>
</dbReference>
<dbReference type="GO" id="GO:0034335">
    <property type="term" value="F:DNA negative supercoiling activity"/>
    <property type="evidence" value="ECO:0007669"/>
    <property type="project" value="UniProtKB-ARBA"/>
</dbReference>
<dbReference type="GO" id="GO:0046872">
    <property type="term" value="F:metal ion binding"/>
    <property type="evidence" value="ECO:0007669"/>
    <property type="project" value="UniProtKB-KW"/>
</dbReference>
<dbReference type="GO" id="GO:0007059">
    <property type="term" value="P:chromosome segregation"/>
    <property type="evidence" value="ECO:0007669"/>
    <property type="project" value="UniProtKB-UniRule"/>
</dbReference>
<dbReference type="GO" id="GO:0006265">
    <property type="term" value="P:DNA topological change"/>
    <property type="evidence" value="ECO:0007669"/>
    <property type="project" value="UniProtKB-UniRule"/>
</dbReference>
<dbReference type="CDD" id="cd16928">
    <property type="entry name" value="HATPase_GyrB-like"/>
    <property type="match status" value="1"/>
</dbReference>
<dbReference type="CDD" id="cd00822">
    <property type="entry name" value="TopoII_Trans_DNA_gyrase"/>
    <property type="match status" value="1"/>
</dbReference>
<dbReference type="FunFam" id="3.30.230.10:FF:000005">
    <property type="entry name" value="DNA gyrase subunit B"/>
    <property type="match status" value="1"/>
</dbReference>
<dbReference type="FunFam" id="3.30.565.10:FF:000002">
    <property type="entry name" value="DNA gyrase subunit B"/>
    <property type="match status" value="1"/>
</dbReference>
<dbReference type="FunFam" id="3.40.50.670:FF:000002">
    <property type="entry name" value="DNA gyrase subunit B"/>
    <property type="match status" value="1"/>
</dbReference>
<dbReference type="Gene3D" id="3.30.230.10">
    <property type="match status" value="1"/>
</dbReference>
<dbReference type="Gene3D" id="3.40.50.670">
    <property type="match status" value="1"/>
</dbReference>
<dbReference type="Gene3D" id="3.30.565.10">
    <property type="entry name" value="Histidine kinase-like ATPase, C-terminal domain"/>
    <property type="match status" value="1"/>
</dbReference>
<dbReference type="HAMAP" id="MF_00939">
    <property type="entry name" value="ParE_type2"/>
    <property type="match status" value="1"/>
</dbReference>
<dbReference type="InterPro" id="IPR002288">
    <property type="entry name" value="DNA_gyrase_B_C"/>
</dbReference>
<dbReference type="InterPro" id="IPR036890">
    <property type="entry name" value="HATPase_C_sf"/>
</dbReference>
<dbReference type="InterPro" id="IPR005740">
    <property type="entry name" value="ParE_type2"/>
</dbReference>
<dbReference type="InterPro" id="IPR020568">
    <property type="entry name" value="Ribosomal_Su5_D2-typ_SF"/>
</dbReference>
<dbReference type="InterPro" id="IPR014721">
    <property type="entry name" value="Ribsml_uS5_D2-typ_fold_subgr"/>
</dbReference>
<dbReference type="InterPro" id="IPR001241">
    <property type="entry name" value="Topo_IIA"/>
</dbReference>
<dbReference type="InterPro" id="IPR013760">
    <property type="entry name" value="Topo_IIA-like_dom_sf"/>
</dbReference>
<dbReference type="InterPro" id="IPR000565">
    <property type="entry name" value="Topo_IIA_B"/>
</dbReference>
<dbReference type="InterPro" id="IPR013759">
    <property type="entry name" value="Topo_IIA_B_C"/>
</dbReference>
<dbReference type="InterPro" id="IPR013506">
    <property type="entry name" value="Topo_IIA_bsu_dom2"/>
</dbReference>
<dbReference type="InterPro" id="IPR018522">
    <property type="entry name" value="TopoIIA_CS"/>
</dbReference>
<dbReference type="InterPro" id="IPR006171">
    <property type="entry name" value="TOPRIM_dom"/>
</dbReference>
<dbReference type="NCBIfam" id="TIGR01058">
    <property type="entry name" value="parE_Gpos"/>
    <property type="match status" value="1"/>
</dbReference>
<dbReference type="NCBIfam" id="NF004189">
    <property type="entry name" value="PRK05644.1"/>
    <property type="match status" value="1"/>
</dbReference>
<dbReference type="PANTHER" id="PTHR45866">
    <property type="entry name" value="DNA GYRASE/TOPOISOMERASE SUBUNIT B"/>
    <property type="match status" value="1"/>
</dbReference>
<dbReference type="PANTHER" id="PTHR45866:SF12">
    <property type="entry name" value="DNA TOPOISOMERASE 4 SUBUNIT B"/>
    <property type="match status" value="1"/>
</dbReference>
<dbReference type="Pfam" id="PF00204">
    <property type="entry name" value="DNA_gyraseB"/>
    <property type="match status" value="1"/>
</dbReference>
<dbReference type="Pfam" id="PF00986">
    <property type="entry name" value="DNA_gyraseB_C"/>
    <property type="match status" value="1"/>
</dbReference>
<dbReference type="Pfam" id="PF02518">
    <property type="entry name" value="HATPase_c"/>
    <property type="match status" value="1"/>
</dbReference>
<dbReference type="Pfam" id="PF01751">
    <property type="entry name" value="Toprim"/>
    <property type="match status" value="1"/>
</dbReference>
<dbReference type="PRINTS" id="PR01159">
    <property type="entry name" value="DNAGYRASEB"/>
</dbReference>
<dbReference type="PRINTS" id="PR00418">
    <property type="entry name" value="TPI2FAMILY"/>
</dbReference>
<dbReference type="SMART" id="SM00387">
    <property type="entry name" value="HATPase_c"/>
    <property type="match status" value="1"/>
</dbReference>
<dbReference type="SMART" id="SM00433">
    <property type="entry name" value="TOP2c"/>
    <property type="match status" value="1"/>
</dbReference>
<dbReference type="SUPFAM" id="SSF55874">
    <property type="entry name" value="ATPase domain of HSP90 chaperone/DNA topoisomerase II/histidine kinase"/>
    <property type="match status" value="1"/>
</dbReference>
<dbReference type="SUPFAM" id="SSF54211">
    <property type="entry name" value="Ribosomal protein S5 domain 2-like"/>
    <property type="match status" value="1"/>
</dbReference>
<dbReference type="SUPFAM" id="SSF56719">
    <property type="entry name" value="Type II DNA topoisomerase"/>
    <property type="match status" value="1"/>
</dbReference>
<dbReference type="PROSITE" id="PS00177">
    <property type="entry name" value="TOPOISOMERASE_II"/>
    <property type="match status" value="1"/>
</dbReference>
<dbReference type="PROSITE" id="PS50880">
    <property type="entry name" value="TOPRIM"/>
    <property type="match status" value="1"/>
</dbReference>
<name>PARE_STAAM</name>
<organism>
    <name type="scientific">Staphylococcus aureus (strain Mu50 / ATCC 700699)</name>
    <dbReference type="NCBI Taxonomy" id="158878"/>
    <lineage>
        <taxon>Bacteria</taxon>
        <taxon>Bacillati</taxon>
        <taxon>Bacillota</taxon>
        <taxon>Bacilli</taxon>
        <taxon>Bacillales</taxon>
        <taxon>Staphylococcaceae</taxon>
        <taxon>Staphylococcus</taxon>
    </lineage>
</organism>
<gene>
    <name evidence="1" type="primary">parE</name>
    <name type="synonym">grlB</name>
    <name type="ordered locus">SAV1354</name>
</gene>
<comment type="function">
    <text evidence="1">Topoisomerase IV is essential for chromosome segregation. It relaxes supercoiled DNA. Performs the decatenation events required during the replication of a circular DNA molecule.</text>
</comment>
<comment type="catalytic activity">
    <reaction evidence="1">
        <text>ATP-dependent breakage, passage and rejoining of double-stranded DNA.</text>
        <dbReference type="EC" id="5.6.2.2"/>
    </reaction>
</comment>
<comment type="cofactor">
    <cofactor evidence="1">
        <name>Mg(2+)</name>
        <dbReference type="ChEBI" id="CHEBI:18420"/>
    </cofactor>
    <cofactor evidence="1">
        <name>Mn(2+)</name>
        <dbReference type="ChEBI" id="CHEBI:29035"/>
    </cofactor>
    <cofactor evidence="1">
        <name>Ca(2+)</name>
        <dbReference type="ChEBI" id="CHEBI:29108"/>
    </cofactor>
    <text evidence="1">Binds two Mg(2+) per subunit. The magnesium ions form salt bridges with both the protein and the DNA. Can also accept other divalent metal cations, such as Mn(2+) or Ca(2+).</text>
</comment>
<comment type="subunit">
    <text evidence="1">Heterotetramer composed of ParC and ParE.</text>
</comment>
<comment type="similarity">
    <text evidence="1">Belongs to the type II topoisomerase family. ParE type 2 subfamily.</text>
</comment>
<comment type="sequence caution" evidence="3">
    <conflict type="erroneous initiation">
        <sequence resource="EMBL-CDS" id="BAB57516"/>
    </conflict>
</comment>
<sequence length="663" mass="74337">MNKQNNYSDDSIQVLEGLEAVRKRPGMYIGSTDKRGLHHLVYEIVDNSVDEVLNGYGNEIDVTINKDGSISIEDNGRGMPTGIHKSGKPTVEVIFTVLHAGGKFGQGGYKTSGGLHGVGASVVNALSEWLEVEIHRDGSIYHQSFKNGGSPSSGLVKKGKTKKTGTKVTFKPDDTIFKASTSFNFDVLSERLQESAFLLKNLKITLNDLRSGKERQEHYHYEEGIKEFVSYVNEGKEVLHDVATFSGEANGIEVDVAFQYNDQYSESILSFVNNVRTKDGGTHEVGFKTAMTRVFNDYARRINELKTKDKNLDGNDIREGLTAVVSVRIPEELLQFEGQTKSKLGTSEARSAVDSVVADKLPFYLEEKGQLSKSLVKKAIKAQQAREAARKAREDARSGKKNKRKDTLLSGKLTPAQSKNTEKNELYLVEGDSAGGSAKLGRDRKFQAILPLRGKVINTEKARLEDIFKNEEINTIIHTIGAGVGTDFKIEDSNYNRVIIMTDADTDGAHIQVLLLTFFFKYMKPLVQAGRVFIALPPLYKLEKGKGKTKRVEYAWTDEELNKLQKELGKGFTLQRYKGLGEMNPEQLWETTMNPETRTLIRVQVEDEVRSSKRVTTLMGDKVQPRREWIEKHVEFGMQEDQSILDNSEVQVLENDQFDEEEI</sequence>
<keyword id="KW-0067">ATP-binding</keyword>
<keyword id="KW-0238">DNA-binding</keyword>
<keyword id="KW-0413">Isomerase</keyword>
<keyword id="KW-0460">Magnesium</keyword>
<keyword id="KW-0479">Metal-binding</keyword>
<keyword id="KW-0547">Nucleotide-binding</keyword>
<keyword id="KW-0799">Topoisomerase</keyword>
<evidence type="ECO:0000255" key="1">
    <source>
        <dbReference type="HAMAP-Rule" id="MF_00939"/>
    </source>
</evidence>
<evidence type="ECO:0000256" key="2">
    <source>
        <dbReference type="SAM" id="MobiDB-lite"/>
    </source>
</evidence>
<evidence type="ECO:0000305" key="3"/>
<feature type="chain" id="PRO_0000145435" description="DNA topoisomerase 4 subunit B">
    <location>
        <begin position="1"/>
        <end position="663"/>
    </location>
</feature>
<feature type="domain" description="Toprim" evidence="1">
    <location>
        <begin position="424"/>
        <end position="538"/>
    </location>
</feature>
<feature type="region of interest" description="Disordered" evidence="2">
    <location>
        <begin position="386"/>
        <end position="416"/>
    </location>
</feature>
<feature type="compositionally biased region" description="Basic and acidic residues" evidence="2">
    <location>
        <begin position="387"/>
        <end position="398"/>
    </location>
</feature>
<feature type="binding site" evidence="1">
    <location>
        <position position="7"/>
    </location>
    <ligand>
        <name>ATP</name>
        <dbReference type="ChEBI" id="CHEBI:30616"/>
    </ligand>
</feature>
<feature type="binding site" evidence="1">
    <location>
        <position position="47"/>
    </location>
    <ligand>
        <name>ATP</name>
        <dbReference type="ChEBI" id="CHEBI:30616"/>
    </ligand>
</feature>
<feature type="binding site" evidence="1">
    <location>
        <position position="74"/>
    </location>
    <ligand>
        <name>ATP</name>
        <dbReference type="ChEBI" id="CHEBI:30616"/>
    </ligand>
</feature>
<feature type="binding site" evidence="1">
    <location>
        <begin position="114"/>
        <end position="120"/>
    </location>
    <ligand>
        <name>ATP</name>
        <dbReference type="ChEBI" id="CHEBI:30616"/>
    </ligand>
</feature>
<feature type="binding site" evidence="1">
    <location>
        <position position="341"/>
    </location>
    <ligand>
        <name>ATP</name>
        <dbReference type="ChEBI" id="CHEBI:30616"/>
    </ligand>
</feature>
<feature type="binding site" evidence="1">
    <location>
        <position position="430"/>
    </location>
    <ligand>
        <name>Mg(2+)</name>
        <dbReference type="ChEBI" id="CHEBI:18420"/>
        <label>1</label>
        <note>catalytic</note>
    </ligand>
</feature>
<feature type="binding site" evidence="1">
    <location>
        <position position="503"/>
    </location>
    <ligand>
        <name>Mg(2+)</name>
        <dbReference type="ChEBI" id="CHEBI:18420"/>
        <label>1</label>
        <note>catalytic</note>
    </ligand>
</feature>
<feature type="binding site" evidence="1">
    <location>
        <position position="503"/>
    </location>
    <ligand>
        <name>Mg(2+)</name>
        <dbReference type="ChEBI" id="CHEBI:18420"/>
        <label>2</label>
    </ligand>
</feature>
<feature type="binding site" evidence="1">
    <location>
        <position position="505"/>
    </location>
    <ligand>
        <name>Mg(2+)</name>
        <dbReference type="ChEBI" id="CHEBI:18420"/>
        <label>2</label>
    </ligand>
</feature>
<feature type="site" description="Interaction with DNA" evidence="1">
    <location>
        <position position="455"/>
    </location>
</feature>
<feature type="site" description="Interaction with DNA" evidence="1">
    <location>
        <position position="458"/>
    </location>
</feature>
<feature type="site" description="Interaction with DNA" evidence="1">
    <location>
        <position position="510"/>
    </location>
</feature>
<feature type="site" description="Interaction with DNA" evidence="1">
    <location>
        <position position="626"/>
    </location>
</feature>
<proteinExistence type="inferred from homology"/>
<protein>
    <recommendedName>
        <fullName evidence="1">DNA topoisomerase 4 subunit B</fullName>
        <ecNumber evidence="1">5.6.2.2</ecNumber>
    </recommendedName>
    <alternativeName>
        <fullName evidence="1">Topoisomerase IV subunit B</fullName>
    </alternativeName>
</protein>